<name>SPC29_KLULA</name>
<comment type="function">
    <text evidence="1">Component of the spindle pole body (SPB) required for the proper execution of spindle pole body (SPB) duplication. Links the central plaque component SPC42 to the inner plaque component SPC110 (By similarity).</text>
</comment>
<comment type="subcellular location">
    <subcellularLocation>
        <location evidence="1">Nucleus</location>
    </subcellularLocation>
    <subcellularLocation>
        <location evidence="1">Cytoplasm</location>
        <location evidence="1">Cytoskeleton</location>
        <location evidence="1">Microtubule organizing center</location>
        <location evidence="1">Spindle pole body</location>
    </subcellularLocation>
</comment>
<comment type="similarity">
    <text evidence="3">Belongs to the SPC29 family.</text>
</comment>
<gene>
    <name type="primary">SPC29</name>
    <name type="ordered locus">KLLA0D06589g</name>
</gene>
<keyword id="KW-0963">Cytoplasm</keyword>
<keyword id="KW-0206">Cytoskeleton</keyword>
<keyword id="KW-0539">Nucleus</keyword>
<keyword id="KW-1185">Reference proteome</keyword>
<accession>Q6CRT5</accession>
<proteinExistence type="inferred from homology"/>
<evidence type="ECO:0000250" key="1"/>
<evidence type="ECO:0000256" key="2">
    <source>
        <dbReference type="SAM" id="MobiDB-lite"/>
    </source>
</evidence>
<evidence type="ECO:0000305" key="3"/>
<protein>
    <recommendedName>
        <fullName>Spindle pole component 29</fullName>
    </recommendedName>
</protein>
<feature type="chain" id="PRO_0000409187" description="Spindle pole component 29">
    <location>
        <begin position="1"/>
        <end position="273"/>
    </location>
</feature>
<feature type="region of interest" description="Disordered" evidence="2">
    <location>
        <begin position="38"/>
        <end position="72"/>
    </location>
</feature>
<feature type="region of interest" description="Disordered" evidence="2">
    <location>
        <begin position="186"/>
        <end position="212"/>
    </location>
</feature>
<feature type="region of interest" description="Disordered" evidence="2">
    <location>
        <begin position="234"/>
        <end position="258"/>
    </location>
</feature>
<feature type="compositionally biased region" description="Polar residues" evidence="2">
    <location>
        <begin position="53"/>
        <end position="69"/>
    </location>
</feature>
<feature type="compositionally biased region" description="Polar residues" evidence="2">
    <location>
        <begin position="203"/>
        <end position="212"/>
    </location>
</feature>
<organism>
    <name type="scientific">Kluyveromyces lactis (strain ATCC 8585 / CBS 2359 / DSM 70799 / NBRC 1267 / NRRL Y-1140 / WM37)</name>
    <name type="common">Yeast</name>
    <name type="synonym">Candida sphaerica</name>
    <dbReference type="NCBI Taxonomy" id="284590"/>
    <lineage>
        <taxon>Eukaryota</taxon>
        <taxon>Fungi</taxon>
        <taxon>Dikarya</taxon>
        <taxon>Ascomycota</taxon>
        <taxon>Saccharomycotina</taxon>
        <taxon>Saccharomycetes</taxon>
        <taxon>Saccharomycetales</taxon>
        <taxon>Saccharomycetaceae</taxon>
        <taxon>Kluyveromyces</taxon>
    </lineage>
</organism>
<dbReference type="EMBL" id="CR382124">
    <property type="protein sequence ID" value="CAH00450.1"/>
    <property type="molecule type" value="Genomic_DNA"/>
</dbReference>
<dbReference type="RefSeq" id="XP_453354.1">
    <property type="nucleotide sequence ID" value="XM_453354.1"/>
</dbReference>
<dbReference type="SMR" id="Q6CRT5"/>
<dbReference type="STRING" id="284590.Q6CRT5"/>
<dbReference type="PaxDb" id="284590-Q6CRT5"/>
<dbReference type="KEGG" id="kla:KLLA0_D06589g"/>
<dbReference type="eggNOG" id="ENOG502SD8E">
    <property type="taxonomic scope" value="Eukaryota"/>
</dbReference>
<dbReference type="HOGENOM" id="CLU_1019648_0_0_1"/>
<dbReference type="InParanoid" id="Q6CRT5"/>
<dbReference type="Proteomes" id="UP000000598">
    <property type="component" value="Chromosome D"/>
</dbReference>
<dbReference type="GO" id="GO:0005823">
    <property type="term" value="C:central plaque of spindle pole body"/>
    <property type="evidence" value="ECO:0007669"/>
    <property type="project" value="InterPro"/>
</dbReference>
<dbReference type="GO" id="GO:0005737">
    <property type="term" value="C:cytoplasm"/>
    <property type="evidence" value="ECO:0007669"/>
    <property type="project" value="UniProtKB-KW"/>
</dbReference>
<dbReference type="GO" id="GO:0005634">
    <property type="term" value="C:nucleus"/>
    <property type="evidence" value="ECO:0007669"/>
    <property type="project" value="UniProtKB-SubCell"/>
</dbReference>
<dbReference type="GO" id="GO:0005200">
    <property type="term" value="F:structural constituent of cytoskeleton"/>
    <property type="evidence" value="ECO:0007669"/>
    <property type="project" value="InterPro"/>
</dbReference>
<dbReference type="GO" id="GO:0030474">
    <property type="term" value="P:spindle pole body duplication"/>
    <property type="evidence" value="ECO:0007669"/>
    <property type="project" value="InterPro"/>
</dbReference>
<dbReference type="InterPro" id="IPR031392">
    <property type="entry name" value="Spc29"/>
</dbReference>
<dbReference type="Pfam" id="PF17082">
    <property type="entry name" value="Spc29"/>
    <property type="match status" value="1"/>
</dbReference>
<reference key="1">
    <citation type="journal article" date="2004" name="Nature">
        <title>Genome evolution in yeasts.</title>
        <authorList>
            <person name="Dujon B."/>
            <person name="Sherman D."/>
            <person name="Fischer G."/>
            <person name="Durrens P."/>
            <person name="Casaregola S."/>
            <person name="Lafontaine I."/>
            <person name="de Montigny J."/>
            <person name="Marck C."/>
            <person name="Neuveglise C."/>
            <person name="Talla E."/>
            <person name="Goffard N."/>
            <person name="Frangeul L."/>
            <person name="Aigle M."/>
            <person name="Anthouard V."/>
            <person name="Babour A."/>
            <person name="Barbe V."/>
            <person name="Barnay S."/>
            <person name="Blanchin S."/>
            <person name="Beckerich J.-M."/>
            <person name="Beyne E."/>
            <person name="Bleykasten C."/>
            <person name="Boisrame A."/>
            <person name="Boyer J."/>
            <person name="Cattolico L."/>
            <person name="Confanioleri F."/>
            <person name="de Daruvar A."/>
            <person name="Despons L."/>
            <person name="Fabre E."/>
            <person name="Fairhead C."/>
            <person name="Ferry-Dumazet H."/>
            <person name="Groppi A."/>
            <person name="Hantraye F."/>
            <person name="Hennequin C."/>
            <person name="Jauniaux N."/>
            <person name="Joyet P."/>
            <person name="Kachouri R."/>
            <person name="Kerrest A."/>
            <person name="Koszul R."/>
            <person name="Lemaire M."/>
            <person name="Lesur I."/>
            <person name="Ma L."/>
            <person name="Muller H."/>
            <person name="Nicaud J.-M."/>
            <person name="Nikolski M."/>
            <person name="Oztas S."/>
            <person name="Ozier-Kalogeropoulos O."/>
            <person name="Pellenz S."/>
            <person name="Potier S."/>
            <person name="Richard G.-F."/>
            <person name="Straub M.-L."/>
            <person name="Suleau A."/>
            <person name="Swennen D."/>
            <person name="Tekaia F."/>
            <person name="Wesolowski-Louvel M."/>
            <person name="Westhof E."/>
            <person name="Wirth B."/>
            <person name="Zeniou-Meyer M."/>
            <person name="Zivanovic Y."/>
            <person name="Bolotin-Fukuhara M."/>
            <person name="Thierry A."/>
            <person name="Bouchier C."/>
            <person name="Caudron B."/>
            <person name="Scarpelli C."/>
            <person name="Gaillardin C."/>
            <person name="Weissenbach J."/>
            <person name="Wincker P."/>
            <person name="Souciet J.-L."/>
        </authorList>
    </citation>
    <scope>NUCLEOTIDE SEQUENCE [LARGE SCALE GENOMIC DNA]</scope>
    <source>
        <strain>ATCC 8585 / CBS 2359 / DSM 70799 / NBRC 1267 / NRRL Y-1140 / WM37</strain>
    </source>
</reference>
<sequence>MDVSQFLNNVENDDTLQNIRKEYLNSKRTLQELMTNQSPTKKMEFSKKPTLLQERNSNDYINRNVNSSKPTDDEFLRRQLREGLSRKPEPKISLPSLASDTNRLDSIYSSVNKIDELEKKLYHHELQIQALKNELYQSNASNRALQNKVAELQDSVRMLAALSHSNVKADTDNSQLSANGKWTRHYAGPNSNGNGVYLDRPQSAPSTSSTSEWVANALHDSDDTRVLLGWKQPSSTRVDNSSNFHFPHNQPRNLSNFDDNTSRLIGVTGKTRN</sequence>